<organism>
    <name type="scientific">Shewanella sp. (strain W3-18-1)</name>
    <dbReference type="NCBI Taxonomy" id="351745"/>
    <lineage>
        <taxon>Bacteria</taxon>
        <taxon>Pseudomonadati</taxon>
        <taxon>Pseudomonadota</taxon>
        <taxon>Gammaproteobacteria</taxon>
        <taxon>Alteromonadales</taxon>
        <taxon>Shewanellaceae</taxon>
        <taxon>Shewanella</taxon>
    </lineage>
</organism>
<dbReference type="EC" id="4.2.1.33" evidence="1"/>
<dbReference type="EMBL" id="CP000503">
    <property type="protein sequence ID" value="ABM23227.1"/>
    <property type="molecule type" value="Genomic_DNA"/>
</dbReference>
<dbReference type="SMR" id="A1REY2"/>
<dbReference type="KEGG" id="shw:Sputw3181_0376"/>
<dbReference type="HOGENOM" id="CLU_006714_3_4_6"/>
<dbReference type="UniPathway" id="UPA00048">
    <property type="reaction ID" value="UER00071"/>
</dbReference>
<dbReference type="Proteomes" id="UP000002597">
    <property type="component" value="Chromosome"/>
</dbReference>
<dbReference type="GO" id="GO:0003861">
    <property type="term" value="F:3-isopropylmalate dehydratase activity"/>
    <property type="evidence" value="ECO:0007669"/>
    <property type="project" value="UniProtKB-UniRule"/>
</dbReference>
<dbReference type="GO" id="GO:0051539">
    <property type="term" value="F:4 iron, 4 sulfur cluster binding"/>
    <property type="evidence" value="ECO:0007669"/>
    <property type="project" value="UniProtKB-KW"/>
</dbReference>
<dbReference type="GO" id="GO:0046872">
    <property type="term" value="F:metal ion binding"/>
    <property type="evidence" value="ECO:0007669"/>
    <property type="project" value="UniProtKB-KW"/>
</dbReference>
<dbReference type="GO" id="GO:0009098">
    <property type="term" value="P:L-leucine biosynthetic process"/>
    <property type="evidence" value="ECO:0007669"/>
    <property type="project" value="UniProtKB-UniRule"/>
</dbReference>
<dbReference type="CDD" id="cd01583">
    <property type="entry name" value="IPMI"/>
    <property type="match status" value="1"/>
</dbReference>
<dbReference type="FunFam" id="3.30.499.10:FF:000006">
    <property type="entry name" value="3-isopropylmalate dehydratase large subunit"/>
    <property type="match status" value="1"/>
</dbReference>
<dbReference type="FunFam" id="3.30.499.10:FF:000007">
    <property type="entry name" value="3-isopropylmalate dehydratase large subunit"/>
    <property type="match status" value="1"/>
</dbReference>
<dbReference type="Gene3D" id="3.30.499.10">
    <property type="entry name" value="Aconitase, domain 3"/>
    <property type="match status" value="2"/>
</dbReference>
<dbReference type="HAMAP" id="MF_01026">
    <property type="entry name" value="LeuC_type1"/>
    <property type="match status" value="1"/>
</dbReference>
<dbReference type="InterPro" id="IPR004430">
    <property type="entry name" value="3-IsopropMal_deHydase_lsu"/>
</dbReference>
<dbReference type="InterPro" id="IPR015931">
    <property type="entry name" value="Acnase/IPM_dHydase_lsu_aba_1/3"/>
</dbReference>
<dbReference type="InterPro" id="IPR001030">
    <property type="entry name" value="Acoase/IPM_deHydtase_lsu_aba"/>
</dbReference>
<dbReference type="InterPro" id="IPR018136">
    <property type="entry name" value="Aconitase_4Fe-4S_BS"/>
</dbReference>
<dbReference type="InterPro" id="IPR036008">
    <property type="entry name" value="Aconitase_4Fe-4S_dom"/>
</dbReference>
<dbReference type="InterPro" id="IPR050067">
    <property type="entry name" value="IPM_dehydratase_rel_enz"/>
</dbReference>
<dbReference type="InterPro" id="IPR033941">
    <property type="entry name" value="IPMI_cat"/>
</dbReference>
<dbReference type="NCBIfam" id="TIGR00170">
    <property type="entry name" value="leuC"/>
    <property type="match status" value="1"/>
</dbReference>
<dbReference type="NCBIfam" id="NF004016">
    <property type="entry name" value="PRK05478.1"/>
    <property type="match status" value="1"/>
</dbReference>
<dbReference type="NCBIfam" id="NF009116">
    <property type="entry name" value="PRK12466.1"/>
    <property type="match status" value="1"/>
</dbReference>
<dbReference type="PANTHER" id="PTHR43822:SF9">
    <property type="entry name" value="3-ISOPROPYLMALATE DEHYDRATASE"/>
    <property type="match status" value="1"/>
</dbReference>
<dbReference type="PANTHER" id="PTHR43822">
    <property type="entry name" value="HOMOACONITASE, MITOCHONDRIAL-RELATED"/>
    <property type="match status" value="1"/>
</dbReference>
<dbReference type="Pfam" id="PF00330">
    <property type="entry name" value="Aconitase"/>
    <property type="match status" value="1"/>
</dbReference>
<dbReference type="PRINTS" id="PR00415">
    <property type="entry name" value="ACONITASE"/>
</dbReference>
<dbReference type="SUPFAM" id="SSF53732">
    <property type="entry name" value="Aconitase iron-sulfur domain"/>
    <property type="match status" value="1"/>
</dbReference>
<dbReference type="PROSITE" id="PS00450">
    <property type="entry name" value="ACONITASE_1"/>
    <property type="match status" value="1"/>
</dbReference>
<dbReference type="PROSITE" id="PS01244">
    <property type="entry name" value="ACONITASE_2"/>
    <property type="match status" value="1"/>
</dbReference>
<protein>
    <recommendedName>
        <fullName evidence="1">3-isopropylmalate dehydratase large subunit</fullName>
        <ecNumber evidence="1">4.2.1.33</ecNumber>
    </recommendedName>
    <alternativeName>
        <fullName evidence="1">Alpha-IPM isomerase</fullName>
        <shortName evidence="1">IPMI</shortName>
    </alternativeName>
    <alternativeName>
        <fullName evidence="1">Isopropylmalate isomerase</fullName>
    </alternativeName>
</protein>
<reference key="1">
    <citation type="submission" date="2006-12" db="EMBL/GenBank/DDBJ databases">
        <title>Complete sequence of Shewanella sp. W3-18-1.</title>
        <authorList>
            <consortium name="US DOE Joint Genome Institute"/>
            <person name="Copeland A."/>
            <person name="Lucas S."/>
            <person name="Lapidus A."/>
            <person name="Barry K."/>
            <person name="Detter J.C."/>
            <person name="Glavina del Rio T."/>
            <person name="Hammon N."/>
            <person name="Israni S."/>
            <person name="Dalin E."/>
            <person name="Tice H."/>
            <person name="Pitluck S."/>
            <person name="Chain P."/>
            <person name="Malfatti S."/>
            <person name="Shin M."/>
            <person name="Vergez L."/>
            <person name="Schmutz J."/>
            <person name="Larimer F."/>
            <person name="Land M."/>
            <person name="Hauser L."/>
            <person name="Kyrpides N."/>
            <person name="Lykidis A."/>
            <person name="Tiedje J."/>
            <person name="Richardson P."/>
        </authorList>
    </citation>
    <scope>NUCLEOTIDE SEQUENCE [LARGE SCALE GENOMIC DNA]</scope>
    <source>
        <strain>W3-18-1</strain>
    </source>
</reference>
<keyword id="KW-0004">4Fe-4S</keyword>
<keyword id="KW-0028">Amino-acid biosynthesis</keyword>
<keyword id="KW-0100">Branched-chain amino acid biosynthesis</keyword>
<keyword id="KW-0408">Iron</keyword>
<keyword id="KW-0411">Iron-sulfur</keyword>
<keyword id="KW-0432">Leucine biosynthesis</keyword>
<keyword id="KW-0456">Lyase</keyword>
<keyword id="KW-0479">Metal-binding</keyword>
<name>LEUC_SHESW</name>
<feature type="chain" id="PRO_1000063610" description="3-isopropylmalate dehydratase large subunit">
    <location>
        <begin position="1"/>
        <end position="474"/>
    </location>
</feature>
<feature type="binding site" evidence="1">
    <location>
        <position position="355"/>
    </location>
    <ligand>
        <name>[4Fe-4S] cluster</name>
        <dbReference type="ChEBI" id="CHEBI:49883"/>
    </ligand>
</feature>
<feature type="binding site" evidence="1">
    <location>
        <position position="415"/>
    </location>
    <ligand>
        <name>[4Fe-4S] cluster</name>
        <dbReference type="ChEBI" id="CHEBI:49883"/>
    </ligand>
</feature>
<feature type="binding site" evidence="1">
    <location>
        <position position="418"/>
    </location>
    <ligand>
        <name>[4Fe-4S] cluster</name>
        <dbReference type="ChEBI" id="CHEBI:49883"/>
    </ligand>
</feature>
<sequence length="474" mass="50358">MTTVPKNAVAKTLYQKVWDAHVVATPEGEAPIIYVDRHLVHEVTSPQAFSGLKVAGRKLRAPEKTFATMDHNTSTRSASLDALSPMARTQVETLAQNCKDFGVRLYDIHHPNQGIVHVMGPELGITLPGTVIVCGDSHTATHGAFGALAFGIGTSEVEHVLATQTLRQLKAKTMKIEVRGHVSDGVTAKDIVLAIIGKIGMDGGTGYVVEFCGEAIEALSMEGRMTVCNMAIEMGAKAGMVAPDQTTFDYLAGREFAPKGEDWAEAVAYWQAIKTDDGAVFDAVVELDAADIAPQLTWGTNPGQVVAIDGKVPNPLDEANPSTRASMEKALEYIGLSAGTPMTDISINKVFIGSCTNSRIEDLRSAAVHAKGRKVASGVTAIVVPGSGQVKAQAEAEGLDKIFIEAGFEWRLPGCSMCLAMNDDRLEAGDRCASTSNRNFEGRQGRGSRTHLVSPAMAAAAAVAGHFVDIRKPY</sequence>
<evidence type="ECO:0000255" key="1">
    <source>
        <dbReference type="HAMAP-Rule" id="MF_01026"/>
    </source>
</evidence>
<proteinExistence type="inferred from homology"/>
<accession>A1REY2</accession>
<gene>
    <name evidence="1" type="primary">leuC</name>
    <name type="ordered locus">Sputw3181_0376</name>
</gene>
<comment type="function">
    <text evidence="1">Catalyzes the isomerization between 2-isopropylmalate and 3-isopropylmalate, via the formation of 2-isopropylmaleate.</text>
</comment>
<comment type="catalytic activity">
    <reaction evidence="1">
        <text>(2R,3S)-3-isopropylmalate = (2S)-2-isopropylmalate</text>
        <dbReference type="Rhea" id="RHEA:32287"/>
        <dbReference type="ChEBI" id="CHEBI:1178"/>
        <dbReference type="ChEBI" id="CHEBI:35121"/>
        <dbReference type="EC" id="4.2.1.33"/>
    </reaction>
</comment>
<comment type="cofactor">
    <cofactor evidence="1">
        <name>[4Fe-4S] cluster</name>
        <dbReference type="ChEBI" id="CHEBI:49883"/>
    </cofactor>
    <text evidence="1">Binds 1 [4Fe-4S] cluster per subunit.</text>
</comment>
<comment type="pathway">
    <text evidence="1">Amino-acid biosynthesis; L-leucine biosynthesis; L-leucine from 3-methyl-2-oxobutanoate: step 2/4.</text>
</comment>
<comment type="subunit">
    <text evidence="1">Heterodimer of LeuC and LeuD.</text>
</comment>
<comment type="similarity">
    <text evidence="1">Belongs to the aconitase/IPM isomerase family. LeuC type 1 subfamily.</text>
</comment>